<keyword id="KW-0025">Alternative splicing</keyword>
<keyword id="KW-0067">ATP-binding</keyword>
<keyword id="KW-0418">Kinase</keyword>
<keyword id="KW-0547">Nucleotide-binding</keyword>
<keyword id="KW-1185">Reference proteome</keyword>
<keyword id="KW-0677">Repeat</keyword>
<keyword id="KW-0723">Serine/threonine-protein kinase</keyword>
<keyword id="KW-0808">Transferase</keyword>
<organism>
    <name type="scientific">Mus musculus</name>
    <name type="common">Mouse</name>
    <dbReference type="NCBI Taxonomy" id="10090"/>
    <lineage>
        <taxon>Eukaryota</taxon>
        <taxon>Metazoa</taxon>
        <taxon>Chordata</taxon>
        <taxon>Craniata</taxon>
        <taxon>Vertebrata</taxon>
        <taxon>Euteleostomi</taxon>
        <taxon>Mammalia</taxon>
        <taxon>Eutheria</taxon>
        <taxon>Euarchontoglires</taxon>
        <taxon>Glires</taxon>
        <taxon>Rodentia</taxon>
        <taxon>Myomorpha</taxon>
        <taxon>Muroidea</taxon>
        <taxon>Muridae</taxon>
        <taxon>Murinae</taxon>
        <taxon>Mus</taxon>
        <taxon>Mus</taxon>
    </lineage>
</organism>
<feature type="chain" id="PRO_0000250154" description="Serine/threonine-protein kinase ULK4">
    <location>
        <begin position="1"/>
        <end position="1303"/>
    </location>
</feature>
<feature type="domain" description="Protein kinase" evidence="2">
    <location>
        <begin position="4"/>
        <end position="280"/>
    </location>
</feature>
<feature type="repeat" description="HEAT 1">
    <location>
        <begin position="504"/>
        <end position="543"/>
    </location>
</feature>
<feature type="repeat" description="HEAT 2">
    <location>
        <begin position="727"/>
        <end position="765"/>
    </location>
</feature>
<feature type="repeat" description="HEAT 3">
    <location>
        <begin position="796"/>
        <end position="834"/>
    </location>
</feature>
<feature type="repeat" description="HEAT 4">
    <location>
        <begin position="926"/>
        <end position="964"/>
    </location>
</feature>
<feature type="repeat" description="HEAT 5">
    <location>
        <begin position="1025"/>
        <end position="1063"/>
    </location>
</feature>
<feature type="repeat" description="HEAT 6">
    <location>
        <begin position="1105"/>
        <end position="1143"/>
    </location>
</feature>
<feature type="repeat" description="HEAT 7">
    <location>
        <begin position="1151"/>
        <end position="1189"/>
    </location>
</feature>
<feature type="region of interest" description="Disordered" evidence="3">
    <location>
        <begin position="304"/>
        <end position="332"/>
    </location>
</feature>
<feature type="region of interest" description="Disordered" evidence="3">
    <location>
        <begin position="369"/>
        <end position="401"/>
    </location>
</feature>
<feature type="compositionally biased region" description="Polar residues" evidence="3">
    <location>
        <begin position="384"/>
        <end position="400"/>
    </location>
</feature>
<feature type="active site" description="Proton acceptor" evidence="2">
    <location>
        <position position="121"/>
    </location>
</feature>
<feature type="splice variant" id="VSP_020605" description="In isoform 5." evidence="7">
    <location>
        <begin position="1"/>
        <end position="1050"/>
    </location>
</feature>
<feature type="splice variant" id="VSP_020606" description="In isoform 4." evidence="6">
    <location>
        <begin position="1"/>
        <end position="430"/>
    </location>
</feature>
<feature type="splice variant" id="VSP_020607" description="In isoform 2." evidence="7">
    <original>RSKV</original>
    <variation>LLYV</variation>
    <location>
        <begin position="527"/>
        <end position="530"/>
    </location>
</feature>
<feature type="splice variant" id="VSP_020608" description="In isoform 2." evidence="7">
    <location>
        <begin position="531"/>
        <end position="1303"/>
    </location>
</feature>
<feature type="splice variant" id="VSP_020609" description="In isoform 4." evidence="6">
    <original>LVMYIERDSRKTSPGKEQQSGNEYLARCLDLLIQHMVQEPPRILGDILNALANVSGRKHPS</original>
    <variation>RHSQRPGKRVRPEAPIHGPGEAAEDVSPHDACGASSGDVAGISTSSCDRRVSLQLRNYSCE</variation>
    <location>
        <begin position="775"/>
        <end position="835"/>
    </location>
</feature>
<feature type="splice variant" id="VSP_020610" description="In isoform 4." evidence="6">
    <location>
        <begin position="836"/>
        <end position="1303"/>
    </location>
</feature>
<feature type="splice variant" id="VSP_020611" description="In isoform 3." evidence="6 7">
    <original>SHIKSIDLGETNIDGAIGIVASEEFIKVTLSA</original>
    <variation>VSSRSHVWPAPLPWLQHGCEKGGIERLSGICL</variation>
    <location>
        <begin position="879"/>
        <end position="910"/>
    </location>
</feature>
<feature type="splice variant" id="VSP_020612" description="In isoform 3." evidence="6 7">
    <location>
        <begin position="911"/>
        <end position="1303"/>
    </location>
</feature>
<feature type="splice variant" id="VSP_020613" description="In isoform 6." evidence="7">
    <original>LPSEDPEISEVSSKCLSILVQ</original>
    <variation>VRAHLCASAEVQRLKQFYLNF</variation>
    <location>
        <begin position="1165"/>
        <end position="1185"/>
    </location>
</feature>
<protein>
    <recommendedName>
        <fullName>Serine/threonine-protein kinase ULK4</fullName>
        <ecNumber>2.7.11.1</ecNumber>
    </recommendedName>
    <alternativeName>
        <fullName>Unc-51-like kinase 4</fullName>
    </alternativeName>
</protein>
<accession>Q3V129</accession>
<accession>Q2VP87</accession>
<accession>Q32LZ6</accession>
<accession>Q8BLS0</accession>
<accession>Q8C8Z5</accession>
<accession>Q9D4H6</accession>
<dbReference type="EC" id="2.7.11.1"/>
<dbReference type="EMBL" id="AK016524">
    <property type="protein sequence ID" value="BAB30285.1"/>
    <property type="molecule type" value="mRNA"/>
</dbReference>
<dbReference type="EMBL" id="AK043477">
    <property type="protein sequence ID" value="BAC31554.1"/>
    <property type="molecule type" value="mRNA"/>
</dbReference>
<dbReference type="EMBL" id="AK043628">
    <property type="protein sequence ID" value="BAC31600.1"/>
    <property type="molecule type" value="mRNA"/>
</dbReference>
<dbReference type="EMBL" id="AK132731">
    <property type="protein sequence ID" value="BAE21324.1"/>
    <property type="molecule type" value="mRNA"/>
</dbReference>
<dbReference type="EMBL" id="BC109364">
    <property type="protein sequence ID" value="AAI09365.1"/>
    <property type="molecule type" value="mRNA"/>
</dbReference>
<dbReference type="EMBL" id="BC109365">
    <property type="protein sequence ID" value="AAI09366.1"/>
    <property type="molecule type" value="mRNA"/>
</dbReference>
<dbReference type="RefSeq" id="NP_808257.2">
    <property type="nucleotide sequence ID" value="NM_177589.3"/>
</dbReference>
<dbReference type="SMR" id="Q3V129"/>
<dbReference type="FunCoup" id="Q3V129">
    <property type="interactions" value="405"/>
</dbReference>
<dbReference type="STRING" id="10090.ENSMUSP00000131342"/>
<dbReference type="GlyGen" id="Q3V129">
    <property type="glycosylation" value="1 site, 1 O-linked glycan (1 site)"/>
</dbReference>
<dbReference type="PhosphoSitePlus" id="Q3V129"/>
<dbReference type="SwissPalm" id="Q3V129"/>
<dbReference type="PaxDb" id="10090-ENSMUSP00000131342"/>
<dbReference type="ProteomicsDB" id="298433">
    <molecule id="Q3V129-1"/>
</dbReference>
<dbReference type="ProteomicsDB" id="298434">
    <molecule id="Q3V129-2"/>
</dbReference>
<dbReference type="ProteomicsDB" id="298435">
    <molecule id="Q3V129-3"/>
</dbReference>
<dbReference type="ProteomicsDB" id="298436">
    <molecule id="Q3V129-4"/>
</dbReference>
<dbReference type="ProteomicsDB" id="298437">
    <molecule id="Q3V129-5"/>
</dbReference>
<dbReference type="ProteomicsDB" id="298438">
    <molecule id="Q3V129-6"/>
</dbReference>
<dbReference type="Antibodypedia" id="6576">
    <property type="antibodies" value="126 antibodies from 28 providers"/>
</dbReference>
<dbReference type="Ensembl" id="ENSMUST00000171061.8">
    <molecule id="Q3V129-3"/>
    <property type="protein sequence ID" value="ENSMUSP00000129214.2"/>
    <property type="gene ID" value="ENSMUSG00000040936.16"/>
</dbReference>
<dbReference type="GeneID" id="209012"/>
<dbReference type="KEGG" id="mmu:209012"/>
<dbReference type="UCSC" id="uc009scz.2">
    <molecule id="Q3V129-3"/>
    <property type="organism name" value="mouse"/>
</dbReference>
<dbReference type="UCSC" id="uc012hcp.1">
    <molecule id="Q3V129-4"/>
    <property type="organism name" value="mouse"/>
</dbReference>
<dbReference type="AGR" id="MGI:1921622"/>
<dbReference type="CTD" id="54986"/>
<dbReference type="MGI" id="MGI:1921622">
    <property type="gene designation" value="Ulk4"/>
</dbReference>
<dbReference type="VEuPathDB" id="HostDB:ENSMUSG00000040936"/>
<dbReference type="eggNOG" id="KOG0597">
    <property type="taxonomic scope" value="Eukaryota"/>
</dbReference>
<dbReference type="GeneTree" id="ENSGT00940000156541"/>
<dbReference type="HOGENOM" id="CLU_002110_0_0_1"/>
<dbReference type="InParanoid" id="Q3V129"/>
<dbReference type="PhylomeDB" id="Q3V129"/>
<dbReference type="BioGRID-ORCS" id="209012">
    <property type="hits" value="2 hits in 80 CRISPR screens"/>
</dbReference>
<dbReference type="ChiTaRS" id="Ulk4">
    <property type="organism name" value="mouse"/>
</dbReference>
<dbReference type="PRO" id="PR:Q3V129"/>
<dbReference type="Proteomes" id="UP000000589">
    <property type="component" value="Chromosome 9"/>
</dbReference>
<dbReference type="RNAct" id="Q3V129">
    <property type="molecule type" value="protein"/>
</dbReference>
<dbReference type="Bgee" id="ENSMUSG00000040936">
    <property type="expression patterns" value="Expressed in spermatid and 95 other cell types or tissues"/>
</dbReference>
<dbReference type="ExpressionAtlas" id="Q3V129">
    <property type="expression patterns" value="baseline and differential"/>
</dbReference>
<dbReference type="GO" id="GO:0005929">
    <property type="term" value="C:cilium"/>
    <property type="evidence" value="ECO:0000314"/>
    <property type="project" value="MGI"/>
</dbReference>
<dbReference type="GO" id="GO:0005576">
    <property type="term" value="C:extracellular region"/>
    <property type="evidence" value="ECO:0007669"/>
    <property type="project" value="GOC"/>
</dbReference>
<dbReference type="GO" id="GO:0005524">
    <property type="term" value="F:ATP binding"/>
    <property type="evidence" value="ECO:0007669"/>
    <property type="project" value="UniProtKB-KW"/>
</dbReference>
<dbReference type="GO" id="GO:0106310">
    <property type="term" value="F:protein serine kinase activity"/>
    <property type="evidence" value="ECO:0007669"/>
    <property type="project" value="RHEA"/>
</dbReference>
<dbReference type="GO" id="GO:0004674">
    <property type="term" value="F:protein serine/threonine kinase activity"/>
    <property type="evidence" value="ECO:0007669"/>
    <property type="project" value="UniProtKB-KW"/>
</dbReference>
<dbReference type="GO" id="GO:0030534">
    <property type="term" value="P:adult behavior"/>
    <property type="evidence" value="ECO:0000315"/>
    <property type="project" value="MGI"/>
</dbReference>
<dbReference type="GO" id="GO:0007628">
    <property type="term" value="P:adult walking behavior"/>
    <property type="evidence" value="ECO:0000315"/>
    <property type="project" value="MGI"/>
</dbReference>
<dbReference type="GO" id="GO:0035082">
    <property type="term" value="P:axoneme assembly"/>
    <property type="evidence" value="ECO:0000315"/>
    <property type="project" value="MGI"/>
</dbReference>
<dbReference type="GO" id="GO:0007420">
    <property type="term" value="P:brain development"/>
    <property type="evidence" value="ECO:0000315"/>
    <property type="project" value="MGI"/>
</dbReference>
<dbReference type="GO" id="GO:0022010">
    <property type="term" value="P:central nervous system myelination"/>
    <property type="evidence" value="ECO:0000315"/>
    <property type="project" value="MGI"/>
</dbReference>
<dbReference type="GO" id="GO:0021987">
    <property type="term" value="P:cerebral cortex development"/>
    <property type="evidence" value="ECO:0000315"/>
    <property type="project" value="MGI"/>
</dbReference>
<dbReference type="GO" id="GO:0090660">
    <property type="term" value="P:cerebrospinal fluid circulation"/>
    <property type="evidence" value="ECO:0000315"/>
    <property type="project" value="MGI"/>
</dbReference>
<dbReference type="GO" id="GO:0032053">
    <property type="term" value="P:ciliary basal body organization"/>
    <property type="evidence" value="ECO:0000315"/>
    <property type="project" value="MGI"/>
</dbReference>
<dbReference type="GO" id="GO:0050890">
    <property type="term" value="P:cognition"/>
    <property type="evidence" value="ECO:0000315"/>
    <property type="project" value="MGI"/>
</dbReference>
<dbReference type="GO" id="GO:0022038">
    <property type="term" value="P:corpus callosum development"/>
    <property type="evidence" value="ECO:0000315"/>
    <property type="project" value="MGI"/>
</dbReference>
<dbReference type="GO" id="GO:0060996">
    <property type="term" value="P:dendritic spine development"/>
    <property type="evidence" value="ECO:0000315"/>
    <property type="project" value="MGI"/>
</dbReference>
<dbReference type="GO" id="GO:0003351">
    <property type="term" value="P:epithelial cilium movement involved in extracellular fluid movement"/>
    <property type="evidence" value="ECO:0000315"/>
    <property type="project" value="MGI"/>
</dbReference>
<dbReference type="GO" id="GO:0051649">
    <property type="term" value="P:establishment of localization in cell"/>
    <property type="evidence" value="ECO:0000315"/>
    <property type="project" value="MGI"/>
</dbReference>
<dbReference type="GO" id="GO:0097154">
    <property type="term" value="P:GABAergic neuron differentiation"/>
    <property type="evidence" value="ECO:0000315"/>
    <property type="project" value="MGI"/>
</dbReference>
<dbReference type="GO" id="GO:0010467">
    <property type="term" value="P:gene expression"/>
    <property type="evidence" value="ECO:0000315"/>
    <property type="project" value="MGI"/>
</dbReference>
<dbReference type="GO" id="GO:0021819">
    <property type="term" value="P:layer formation in cerebral cortex"/>
    <property type="evidence" value="ECO:0000315"/>
    <property type="project" value="MGI"/>
</dbReference>
<dbReference type="GO" id="GO:0007611">
    <property type="term" value="P:learning or memory"/>
    <property type="evidence" value="ECO:0000315"/>
    <property type="project" value="MGI"/>
</dbReference>
<dbReference type="GO" id="GO:0007613">
    <property type="term" value="P:memory"/>
    <property type="evidence" value="ECO:0000315"/>
    <property type="project" value="MGI"/>
</dbReference>
<dbReference type="GO" id="GO:0000226">
    <property type="term" value="P:microtubule cytoskeleton organization"/>
    <property type="evidence" value="ECO:0000266"/>
    <property type="project" value="MGI"/>
</dbReference>
<dbReference type="GO" id="GO:0044458">
    <property type="term" value="P:motile cilium assembly"/>
    <property type="evidence" value="ECO:0000315"/>
    <property type="project" value="MGI"/>
</dbReference>
<dbReference type="GO" id="GO:0022008">
    <property type="term" value="P:neurogenesis"/>
    <property type="evidence" value="ECO:0000315"/>
    <property type="project" value="MGI"/>
</dbReference>
<dbReference type="GO" id="GO:0150076">
    <property type="term" value="P:neuroinflammatory response"/>
    <property type="evidence" value="ECO:0000315"/>
    <property type="project" value="MGI"/>
</dbReference>
<dbReference type="GO" id="GO:0036445">
    <property type="term" value="P:neuronal stem cell division"/>
    <property type="evidence" value="ECO:0000315"/>
    <property type="project" value="MGI"/>
</dbReference>
<dbReference type="GO" id="GO:0043491">
    <property type="term" value="P:phosphatidylinositol 3-kinase/protein kinase B signal transduction"/>
    <property type="evidence" value="ECO:0000315"/>
    <property type="project" value="MGI"/>
</dbReference>
<dbReference type="GO" id="GO:0042313">
    <property type="term" value="P:protein kinase C deactivation"/>
    <property type="evidence" value="ECO:0000266"/>
    <property type="project" value="MGI"/>
</dbReference>
<dbReference type="GO" id="GO:0021859">
    <property type="term" value="P:pyramidal neuron differentiation"/>
    <property type="evidence" value="ECO:0000315"/>
    <property type="project" value="MGI"/>
</dbReference>
<dbReference type="GO" id="GO:0046328">
    <property type="term" value="P:regulation of JNK cascade"/>
    <property type="evidence" value="ECO:0000266"/>
    <property type="project" value="MGI"/>
</dbReference>
<dbReference type="GO" id="GO:0043408">
    <property type="term" value="P:regulation of MAPK cascade"/>
    <property type="evidence" value="ECO:0000266"/>
    <property type="project" value="MGI"/>
</dbReference>
<dbReference type="GO" id="GO:2001222">
    <property type="term" value="P:regulation of neuron migration"/>
    <property type="evidence" value="ECO:0000266"/>
    <property type="project" value="MGI"/>
</dbReference>
<dbReference type="GO" id="GO:0010975">
    <property type="term" value="P:regulation of neuron projection development"/>
    <property type="evidence" value="ECO:0000266"/>
    <property type="project" value="MGI"/>
</dbReference>
<dbReference type="GO" id="GO:1900744">
    <property type="term" value="P:regulation of p38MAPK cascade"/>
    <property type="evidence" value="ECO:0000266"/>
    <property type="project" value="MGI"/>
</dbReference>
<dbReference type="GO" id="GO:0043254">
    <property type="term" value="P:regulation of protein-containing complex assembly"/>
    <property type="evidence" value="ECO:0000315"/>
    <property type="project" value="MGI"/>
</dbReference>
<dbReference type="GO" id="GO:0009966">
    <property type="term" value="P:regulation of signal transduction"/>
    <property type="evidence" value="ECO:0000315"/>
    <property type="project" value="MGI"/>
</dbReference>
<dbReference type="GO" id="GO:0007600">
    <property type="term" value="P:sensory perception"/>
    <property type="evidence" value="ECO:0000315"/>
    <property type="project" value="MGI"/>
</dbReference>
<dbReference type="GO" id="GO:0007224">
    <property type="term" value="P:smoothened signaling pathway"/>
    <property type="evidence" value="ECO:0000314"/>
    <property type="project" value="MGI"/>
</dbReference>
<dbReference type="GO" id="GO:0035176">
    <property type="term" value="P:social behavior"/>
    <property type="evidence" value="ECO:0000315"/>
    <property type="project" value="MGI"/>
</dbReference>
<dbReference type="GO" id="GO:0021591">
    <property type="term" value="P:ventricular system development"/>
    <property type="evidence" value="ECO:0000315"/>
    <property type="project" value="MGI"/>
</dbReference>
<dbReference type="CDD" id="cd14010">
    <property type="entry name" value="STKc_ULK4"/>
    <property type="match status" value="1"/>
</dbReference>
<dbReference type="FunFam" id="1.10.510.10:FF:000686">
    <property type="entry name" value="Serine/threonine-protein kinase ULK4"/>
    <property type="match status" value="1"/>
</dbReference>
<dbReference type="FunFam" id="1.25.10.10:FF:000231">
    <property type="entry name" value="serine/threonine-protein kinase ULK4 isoform X1"/>
    <property type="match status" value="1"/>
</dbReference>
<dbReference type="Gene3D" id="1.25.10.10">
    <property type="entry name" value="Leucine-rich Repeat Variant"/>
    <property type="match status" value="2"/>
</dbReference>
<dbReference type="Gene3D" id="1.10.510.10">
    <property type="entry name" value="Transferase(Phosphotransferase) domain 1"/>
    <property type="match status" value="1"/>
</dbReference>
<dbReference type="InterPro" id="IPR011989">
    <property type="entry name" value="ARM-like"/>
</dbReference>
<dbReference type="InterPro" id="IPR016024">
    <property type="entry name" value="ARM-type_fold"/>
</dbReference>
<dbReference type="InterPro" id="IPR056981">
    <property type="entry name" value="HEAT_ULK4_RUNKEL"/>
</dbReference>
<dbReference type="InterPro" id="IPR011009">
    <property type="entry name" value="Kinase-like_dom_sf"/>
</dbReference>
<dbReference type="InterPro" id="IPR000719">
    <property type="entry name" value="Prot_kinase_dom"/>
</dbReference>
<dbReference type="InterPro" id="IPR045906">
    <property type="entry name" value="ULK4"/>
</dbReference>
<dbReference type="PANTHER" id="PTHR46240">
    <property type="entry name" value="SER/THR PROTEIN KINASE ULK4"/>
    <property type="match status" value="1"/>
</dbReference>
<dbReference type="PANTHER" id="PTHR46240:SF1">
    <property type="entry name" value="SERINE_THREONINE-PROTEIN KINASE ULK4"/>
    <property type="match status" value="1"/>
</dbReference>
<dbReference type="Pfam" id="PF23606">
    <property type="entry name" value="HEAT_ULK4"/>
    <property type="match status" value="1"/>
</dbReference>
<dbReference type="Pfam" id="PF00069">
    <property type="entry name" value="Pkinase"/>
    <property type="match status" value="1"/>
</dbReference>
<dbReference type="SUPFAM" id="SSF48371">
    <property type="entry name" value="ARM repeat"/>
    <property type="match status" value="1"/>
</dbReference>
<dbReference type="SUPFAM" id="SSF56112">
    <property type="entry name" value="Protein kinase-like (PK-like)"/>
    <property type="match status" value="1"/>
</dbReference>
<dbReference type="PROSITE" id="PS50011">
    <property type="entry name" value="PROTEIN_KINASE_DOM"/>
    <property type="match status" value="1"/>
</dbReference>
<sequence>MENFVLYEEIGRGSRTVVYKGRRKGTINFVAILCTEKCKRPEITNWVRLTHEIKHKNIVTFHEWYETSNHLWLVVELCTGGSLETVIAQDENLPEDVVREFGVDLVTGLHHLHRLGILFCDLSPGKILLEGPGTLKFSNFCLAKVAGESLEEFFALVAAEEGGGDSGENALKKSMKTRVRGSLIYAAPEIVKGTEFSVTSDLWSLGCLLYEMFSGKPPFFSETVSELVEKILYEDPLPPIPKDSSFPKASSDFLNLLDGLLQKDPQKRFSWEGVLQHPFWKDALRGEDSGWASEDSPFSRNVMECSGPHDSRELLQSPKNGQAKGQKAAHRLSQSFRLENPTELRPKSIMGGQLNESIFLLSSRPTPRTSAMVELNPGEGEDPSSPQKTSPLSKMTSGHLSQGALESQMRELIYTDSDLVITPIIDNPKIMKQPAIKFDPKILHLPAYSVEKLLVLKDQDWNDFLQQVCSQIDSSEKSTGALRAKLNLLCYLCVVATHKEVATRLLHSPLFQLLIQHLRIAPNWDIRSKVARVVGMLALHTTELQENVPVIEAITLLTELIRENFRSGKLKQCLLPTLGQLLYLVATQEEKNQHSRDCWAVPLAAYTVLMRCLREGEERVVNHMAAKIIENVCTTFSAQAQGFTTGEIGPVLWHLFRHSTVDALRITAISALCRITRQSPTAFQNVIEKVGLNAVISSLASAICKVQQYMLTLFTAMLSCGIHLQRLIQEKDFVSTVIRLLDSPSTPIRAKAFLVLLYILIHNRDMLLLSCQARLVMYIERDSRKTSPGKEQQSGNEYLARCLDLLIQHMVQEPPRILGDILNALANVSGRKHPSTVQGKQLKMCLPMMPVVLHLVMSQVFRPQVVTEEFLFSYGTILSHIKSIDLGETNIDGAIGIVASEEFIKVTLSAFEAVIQYPVLLADYRSTVMDYILPPLVSLVQSQNVEWRLFSLRLLSETTTLLVSQEPEDGDEEASCDSDSSLLALIRDELLPQYEHILMEPDPVPAYALKLLVAMTEHNPAFTRLVEESKLVPLIFEVILEHQESILGNTMQSVIALLNNLVAYKDSNMQLLYEQGLVGHVCNMFTETATLCLDRDNKTNTEPASTLLASLLDILLGMLTYTSRIVRQALQVQKSGSRGDTQAAEDLLLLSKPLTDLISLLIPLLPSEDPEISEVSSKCLSILVQLYGGENPESLSPENMVTFANLLMTKEDPKDQKLLLRILKRMVTSNERLLESLKNTGSLLQALERLAPAHRLRGPWAGISCALFQQRAAAQGIPELPPYGIPCCGPSHKRVTGVKLYPC</sequence>
<reference key="1">
    <citation type="journal article" date="2005" name="Science">
        <title>The transcriptional landscape of the mammalian genome.</title>
        <authorList>
            <person name="Carninci P."/>
            <person name="Kasukawa T."/>
            <person name="Katayama S."/>
            <person name="Gough J."/>
            <person name="Frith M.C."/>
            <person name="Maeda N."/>
            <person name="Oyama R."/>
            <person name="Ravasi T."/>
            <person name="Lenhard B."/>
            <person name="Wells C."/>
            <person name="Kodzius R."/>
            <person name="Shimokawa K."/>
            <person name="Bajic V.B."/>
            <person name="Brenner S.E."/>
            <person name="Batalov S."/>
            <person name="Forrest A.R."/>
            <person name="Zavolan M."/>
            <person name="Davis M.J."/>
            <person name="Wilming L.G."/>
            <person name="Aidinis V."/>
            <person name="Allen J.E."/>
            <person name="Ambesi-Impiombato A."/>
            <person name="Apweiler R."/>
            <person name="Aturaliya R.N."/>
            <person name="Bailey T.L."/>
            <person name="Bansal M."/>
            <person name="Baxter L."/>
            <person name="Beisel K.W."/>
            <person name="Bersano T."/>
            <person name="Bono H."/>
            <person name="Chalk A.M."/>
            <person name="Chiu K.P."/>
            <person name="Choudhary V."/>
            <person name="Christoffels A."/>
            <person name="Clutterbuck D.R."/>
            <person name="Crowe M.L."/>
            <person name="Dalla E."/>
            <person name="Dalrymple B.P."/>
            <person name="de Bono B."/>
            <person name="Della Gatta G."/>
            <person name="di Bernardo D."/>
            <person name="Down T."/>
            <person name="Engstrom P."/>
            <person name="Fagiolini M."/>
            <person name="Faulkner G."/>
            <person name="Fletcher C.F."/>
            <person name="Fukushima T."/>
            <person name="Furuno M."/>
            <person name="Futaki S."/>
            <person name="Gariboldi M."/>
            <person name="Georgii-Hemming P."/>
            <person name="Gingeras T.R."/>
            <person name="Gojobori T."/>
            <person name="Green R.E."/>
            <person name="Gustincich S."/>
            <person name="Harbers M."/>
            <person name="Hayashi Y."/>
            <person name="Hensch T.K."/>
            <person name="Hirokawa N."/>
            <person name="Hill D."/>
            <person name="Huminiecki L."/>
            <person name="Iacono M."/>
            <person name="Ikeo K."/>
            <person name="Iwama A."/>
            <person name="Ishikawa T."/>
            <person name="Jakt M."/>
            <person name="Kanapin A."/>
            <person name="Katoh M."/>
            <person name="Kawasawa Y."/>
            <person name="Kelso J."/>
            <person name="Kitamura H."/>
            <person name="Kitano H."/>
            <person name="Kollias G."/>
            <person name="Krishnan S.P."/>
            <person name="Kruger A."/>
            <person name="Kummerfeld S.K."/>
            <person name="Kurochkin I.V."/>
            <person name="Lareau L.F."/>
            <person name="Lazarevic D."/>
            <person name="Lipovich L."/>
            <person name="Liu J."/>
            <person name="Liuni S."/>
            <person name="McWilliam S."/>
            <person name="Madan Babu M."/>
            <person name="Madera M."/>
            <person name="Marchionni L."/>
            <person name="Matsuda H."/>
            <person name="Matsuzawa S."/>
            <person name="Miki H."/>
            <person name="Mignone F."/>
            <person name="Miyake S."/>
            <person name="Morris K."/>
            <person name="Mottagui-Tabar S."/>
            <person name="Mulder N."/>
            <person name="Nakano N."/>
            <person name="Nakauchi H."/>
            <person name="Ng P."/>
            <person name="Nilsson R."/>
            <person name="Nishiguchi S."/>
            <person name="Nishikawa S."/>
            <person name="Nori F."/>
            <person name="Ohara O."/>
            <person name="Okazaki Y."/>
            <person name="Orlando V."/>
            <person name="Pang K.C."/>
            <person name="Pavan W.J."/>
            <person name="Pavesi G."/>
            <person name="Pesole G."/>
            <person name="Petrovsky N."/>
            <person name="Piazza S."/>
            <person name="Reed J."/>
            <person name="Reid J.F."/>
            <person name="Ring B.Z."/>
            <person name="Ringwald M."/>
            <person name="Rost B."/>
            <person name="Ruan Y."/>
            <person name="Salzberg S.L."/>
            <person name="Sandelin A."/>
            <person name="Schneider C."/>
            <person name="Schoenbach C."/>
            <person name="Sekiguchi K."/>
            <person name="Semple C.A."/>
            <person name="Seno S."/>
            <person name="Sessa L."/>
            <person name="Sheng Y."/>
            <person name="Shibata Y."/>
            <person name="Shimada H."/>
            <person name="Shimada K."/>
            <person name="Silva D."/>
            <person name="Sinclair B."/>
            <person name="Sperling S."/>
            <person name="Stupka E."/>
            <person name="Sugiura K."/>
            <person name="Sultana R."/>
            <person name="Takenaka Y."/>
            <person name="Taki K."/>
            <person name="Tammoja K."/>
            <person name="Tan S.L."/>
            <person name="Tang S."/>
            <person name="Taylor M.S."/>
            <person name="Tegner J."/>
            <person name="Teichmann S.A."/>
            <person name="Ueda H.R."/>
            <person name="van Nimwegen E."/>
            <person name="Verardo R."/>
            <person name="Wei C.L."/>
            <person name="Yagi K."/>
            <person name="Yamanishi H."/>
            <person name="Zabarovsky E."/>
            <person name="Zhu S."/>
            <person name="Zimmer A."/>
            <person name="Hide W."/>
            <person name="Bult C."/>
            <person name="Grimmond S.M."/>
            <person name="Teasdale R.D."/>
            <person name="Liu E.T."/>
            <person name="Brusic V."/>
            <person name="Quackenbush J."/>
            <person name="Wahlestedt C."/>
            <person name="Mattick J.S."/>
            <person name="Hume D.A."/>
            <person name="Kai C."/>
            <person name="Sasaki D."/>
            <person name="Tomaru Y."/>
            <person name="Fukuda S."/>
            <person name="Kanamori-Katayama M."/>
            <person name="Suzuki M."/>
            <person name="Aoki J."/>
            <person name="Arakawa T."/>
            <person name="Iida J."/>
            <person name="Imamura K."/>
            <person name="Itoh M."/>
            <person name="Kato T."/>
            <person name="Kawaji H."/>
            <person name="Kawagashira N."/>
            <person name="Kawashima T."/>
            <person name="Kojima M."/>
            <person name="Kondo S."/>
            <person name="Konno H."/>
            <person name="Nakano K."/>
            <person name="Ninomiya N."/>
            <person name="Nishio T."/>
            <person name="Okada M."/>
            <person name="Plessy C."/>
            <person name="Shibata K."/>
            <person name="Shiraki T."/>
            <person name="Suzuki S."/>
            <person name="Tagami M."/>
            <person name="Waki K."/>
            <person name="Watahiki A."/>
            <person name="Okamura-Oho Y."/>
            <person name="Suzuki H."/>
            <person name="Kawai J."/>
            <person name="Hayashizaki Y."/>
        </authorList>
    </citation>
    <scope>NUCLEOTIDE SEQUENCE [LARGE SCALE MRNA] (ISOFORMS 2; 3; 5 AND 6)</scope>
    <source>
        <strain>C57BL/6J</strain>
        <tissue>Brain cortex</tissue>
        <tissue>Cerebellum</tissue>
        <tissue>Testis</tissue>
    </source>
</reference>
<reference key="2">
    <citation type="journal article" date="2004" name="Genome Res.">
        <title>The status, quality, and expansion of the NIH full-length cDNA project: the Mammalian Gene Collection (MGC).</title>
        <authorList>
            <consortium name="The MGC Project Team"/>
        </authorList>
    </citation>
    <scope>NUCLEOTIDE SEQUENCE [LARGE SCALE MRNA] (ISOFORM 4)</scope>
    <scope>NUCLEOTIDE SEQUENCE [LARGE SCALE MRNA] OF 303-1303 (ISOFORM 3)</scope>
</reference>
<reference key="3">
    <citation type="journal article" date="2010" name="Cell">
        <title>A tissue-specific atlas of mouse protein phosphorylation and expression.</title>
        <authorList>
            <person name="Huttlin E.L."/>
            <person name="Jedrychowski M.P."/>
            <person name="Elias J.E."/>
            <person name="Goswami T."/>
            <person name="Rad R."/>
            <person name="Beausoleil S.A."/>
            <person name="Villen J."/>
            <person name="Haas W."/>
            <person name="Sowa M.E."/>
            <person name="Gygi S.P."/>
        </authorList>
    </citation>
    <scope>IDENTIFICATION BY MASS SPECTROMETRY [LARGE SCALE ANALYSIS]</scope>
    <source>
        <tissue>Testis</tissue>
    </source>
</reference>
<reference key="4">
    <citation type="journal article" date="2012" name="Vet. Pathol.">
        <title>Congenital hydrocephalus in genetically engineered mice.</title>
        <authorList>
            <person name="Vogel P."/>
            <person name="Read R.W."/>
            <person name="Hansen G.M."/>
            <person name="Payne B.J."/>
            <person name="Small D."/>
            <person name="Sands A.T."/>
            <person name="Zambrowicz B.P."/>
        </authorList>
    </citation>
    <scope>DISRUPTION PHENOTYPE</scope>
</reference>
<reference key="5">
    <citation type="journal article" date="2014" name="J. Cell Sci.">
        <title>Recurrent deletions of ULK4 in schizophrenia: a gene crucial for neuritogenesis and neuronal motility.</title>
        <authorList>
            <person name="Lang B."/>
            <person name="Pu J."/>
            <person name="Hunter I."/>
            <person name="Liu M."/>
            <person name="Martin-Granados C."/>
            <person name="Reilly T.J."/>
            <person name="Gao G.D."/>
            <person name="Guan Z.L."/>
            <person name="Li W.D."/>
            <person name="Shi Y.Y."/>
            <person name="He G."/>
            <person name="He L."/>
            <person name="Stefansson H."/>
            <person name="St Clair D."/>
            <person name="Blackwood D.H."/>
            <person name="McCaig C.D."/>
            <person name="Shen S."/>
        </authorList>
    </citation>
    <scope>TISSUE SPECIFICITY</scope>
    <scope>DISRUPTION PHENOTYPE</scope>
</reference>
<name>ULK4_MOUSE</name>
<evidence type="ECO:0000250" key="1">
    <source>
        <dbReference type="UniProtKB" id="Q96C45"/>
    </source>
</evidence>
<evidence type="ECO:0000255" key="2">
    <source>
        <dbReference type="PROSITE-ProRule" id="PRU00159"/>
    </source>
</evidence>
<evidence type="ECO:0000256" key="3">
    <source>
        <dbReference type="SAM" id="MobiDB-lite"/>
    </source>
</evidence>
<evidence type="ECO:0000269" key="4">
    <source>
    </source>
</evidence>
<evidence type="ECO:0000269" key="5">
    <source>
    </source>
</evidence>
<evidence type="ECO:0000303" key="6">
    <source>
    </source>
</evidence>
<evidence type="ECO:0000303" key="7">
    <source>
    </source>
</evidence>
<gene>
    <name type="primary">Ulk4</name>
</gene>
<comment type="function">
    <text evidence="1">May be involved in the remodeling of cytoskeletal components, such as alpha-tubulin, and in this way regulates neurite branching and elongation, as well as cell motility.</text>
</comment>
<comment type="catalytic activity">
    <reaction>
        <text>L-seryl-[protein] + ATP = O-phospho-L-seryl-[protein] + ADP + H(+)</text>
        <dbReference type="Rhea" id="RHEA:17989"/>
        <dbReference type="Rhea" id="RHEA-COMP:9863"/>
        <dbReference type="Rhea" id="RHEA-COMP:11604"/>
        <dbReference type="ChEBI" id="CHEBI:15378"/>
        <dbReference type="ChEBI" id="CHEBI:29999"/>
        <dbReference type="ChEBI" id="CHEBI:30616"/>
        <dbReference type="ChEBI" id="CHEBI:83421"/>
        <dbReference type="ChEBI" id="CHEBI:456216"/>
        <dbReference type="EC" id="2.7.11.1"/>
    </reaction>
</comment>
<comment type="catalytic activity">
    <reaction>
        <text>L-threonyl-[protein] + ATP = O-phospho-L-threonyl-[protein] + ADP + H(+)</text>
        <dbReference type="Rhea" id="RHEA:46608"/>
        <dbReference type="Rhea" id="RHEA-COMP:11060"/>
        <dbReference type="Rhea" id="RHEA-COMP:11605"/>
        <dbReference type="ChEBI" id="CHEBI:15378"/>
        <dbReference type="ChEBI" id="CHEBI:30013"/>
        <dbReference type="ChEBI" id="CHEBI:30616"/>
        <dbReference type="ChEBI" id="CHEBI:61977"/>
        <dbReference type="ChEBI" id="CHEBI:456216"/>
        <dbReference type="EC" id="2.7.11.1"/>
    </reaction>
</comment>
<comment type="alternative products">
    <event type="alternative splicing"/>
    <isoform>
        <id>Q3V129-1</id>
        <name>1</name>
        <sequence type="displayed"/>
    </isoform>
    <isoform>
        <id>Q3V129-2</id>
        <name>2</name>
        <sequence type="described" ref="VSP_020607 VSP_020608"/>
    </isoform>
    <isoform>
        <id>Q3V129-3</id>
        <name>3</name>
        <sequence type="described" ref="VSP_020611 VSP_020612"/>
    </isoform>
    <isoform>
        <id>Q3V129-4</id>
        <name>4</name>
        <sequence type="described" ref="VSP_020606 VSP_020609 VSP_020610"/>
    </isoform>
    <isoform>
        <id>Q3V129-5</id>
        <name>5</name>
        <sequence type="described" ref="VSP_020605"/>
    </isoform>
    <isoform>
        <id>Q3V129-6</id>
        <name>6</name>
        <sequence type="described" ref="VSP_020613"/>
    </isoform>
</comment>
<comment type="tissue specificity">
    <text evidence="5">Expressed in embryonic and adult brain. In the brain, widely expressed, with highest levels in layers II/III and V of the cortex, piriform cortex, CA1-3 of hippocampus, dentate gyrus, ependymal cells lining the ventricles and choroid plexus, and in the thalamic reticular nucleus (at protein level).</text>
</comment>
<comment type="disruption phenotype">
    <text evidence="4 5">Knockout mice are smaller than sex-matched littermates, and all exhibit domed heads typical of hydrocephalus. The majority die before reaching 4 months of age. Brain lateral and third ventricles are severaly dilated with frequent hemorrhage, sometimes accompanied by fibrosis and neovascularization of the meninges and choroid. Nasal passages and maxillary sinuses are partially filled with varying combinations of proteinaceous fluid or suppurative exudates. Suppurative otitis media is frequently observed. On the respiratory epithelium and ependymal cells lining the dilated ventricles, cilia are shorter than those in wild-type littermate control mice (PubMed:21746835). Partial agenesis of the corpus callosum has also been reported (PubMed:24284070).</text>
</comment>
<comment type="similarity">
    <text evidence="2">Belongs to the protein kinase superfamily. Ser/Thr protein kinase family. APG1/unc-51/ULK1 subfamily.</text>
</comment>
<proteinExistence type="evidence at protein level"/>